<sequence>MTEEATTTLSSADIIEIMKLLPHRYPFLMVDKIIEIDGDNAAIGIKNVTVNEPHFTGHFPESPIMPGVLLIEGMAQTAGAICAKKEGQPGNLVYFMTIENARFRKPVVPGDRVEFHVKKHKQRGNIWKFHCDAKVEGALVAEADIGAMIVRKDQA</sequence>
<organism>
    <name type="scientific">Rhizobium etli (strain CIAT 652)</name>
    <dbReference type="NCBI Taxonomy" id="491916"/>
    <lineage>
        <taxon>Bacteria</taxon>
        <taxon>Pseudomonadati</taxon>
        <taxon>Pseudomonadota</taxon>
        <taxon>Alphaproteobacteria</taxon>
        <taxon>Hyphomicrobiales</taxon>
        <taxon>Rhizobiaceae</taxon>
        <taxon>Rhizobium/Agrobacterium group</taxon>
        <taxon>Rhizobium</taxon>
    </lineage>
</organism>
<name>FABZ_RHIE6</name>
<reference key="1">
    <citation type="journal article" date="2010" name="Appl. Environ. Microbiol.">
        <title>Conserved symbiotic plasmid DNA sequences in the multireplicon pangenomic structure of Rhizobium etli.</title>
        <authorList>
            <person name="Gonzalez V."/>
            <person name="Acosta J.L."/>
            <person name="Santamaria R.I."/>
            <person name="Bustos P."/>
            <person name="Fernandez J.L."/>
            <person name="Hernandez Gonzalez I.L."/>
            <person name="Diaz R."/>
            <person name="Flores M."/>
            <person name="Palacios R."/>
            <person name="Mora J."/>
            <person name="Davila G."/>
        </authorList>
    </citation>
    <scope>NUCLEOTIDE SEQUENCE [LARGE SCALE GENOMIC DNA]</scope>
    <source>
        <strain>CIAT 652</strain>
    </source>
</reference>
<proteinExistence type="inferred from homology"/>
<comment type="function">
    <text evidence="1">Involved in unsaturated fatty acids biosynthesis. Catalyzes the dehydration of short chain beta-hydroxyacyl-ACPs and long chain saturated and unsaturated beta-hydroxyacyl-ACPs.</text>
</comment>
<comment type="catalytic activity">
    <reaction evidence="1">
        <text>a (3R)-hydroxyacyl-[ACP] = a (2E)-enoyl-[ACP] + H2O</text>
        <dbReference type="Rhea" id="RHEA:13097"/>
        <dbReference type="Rhea" id="RHEA-COMP:9925"/>
        <dbReference type="Rhea" id="RHEA-COMP:9945"/>
        <dbReference type="ChEBI" id="CHEBI:15377"/>
        <dbReference type="ChEBI" id="CHEBI:78784"/>
        <dbReference type="ChEBI" id="CHEBI:78827"/>
        <dbReference type="EC" id="4.2.1.59"/>
    </reaction>
</comment>
<comment type="subcellular location">
    <subcellularLocation>
        <location evidence="1">Cytoplasm</location>
    </subcellularLocation>
</comment>
<comment type="similarity">
    <text evidence="1">Belongs to the thioester dehydratase family. FabZ subfamily.</text>
</comment>
<accession>B3PYQ1</accession>
<dbReference type="EC" id="4.2.1.59" evidence="1"/>
<dbReference type="EMBL" id="CP001074">
    <property type="protein sequence ID" value="ACE90980.1"/>
    <property type="molecule type" value="Genomic_DNA"/>
</dbReference>
<dbReference type="SMR" id="B3PYQ1"/>
<dbReference type="KEGG" id="rec:RHECIAT_CH0002019"/>
<dbReference type="eggNOG" id="COG0764">
    <property type="taxonomic scope" value="Bacteria"/>
</dbReference>
<dbReference type="HOGENOM" id="CLU_078912_1_2_5"/>
<dbReference type="Proteomes" id="UP000008817">
    <property type="component" value="Chromosome"/>
</dbReference>
<dbReference type="GO" id="GO:0005737">
    <property type="term" value="C:cytoplasm"/>
    <property type="evidence" value="ECO:0007669"/>
    <property type="project" value="UniProtKB-SubCell"/>
</dbReference>
<dbReference type="GO" id="GO:0016020">
    <property type="term" value="C:membrane"/>
    <property type="evidence" value="ECO:0007669"/>
    <property type="project" value="GOC"/>
</dbReference>
<dbReference type="GO" id="GO:0019171">
    <property type="term" value="F:(3R)-hydroxyacyl-[acyl-carrier-protein] dehydratase activity"/>
    <property type="evidence" value="ECO:0007669"/>
    <property type="project" value="UniProtKB-EC"/>
</dbReference>
<dbReference type="GO" id="GO:0006633">
    <property type="term" value="P:fatty acid biosynthetic process"/>
    <property type="evidence" value="ECO:0007669"/>
    <property type="project" value="UniProtKB-UniRule"/>
</dbReference>
<dbReference type="GO" id="GO:0009245">
    <property type="term" value="P:lipid A biosynthetic process"/>
    <property type="evidence" value="ECO:0007669"/>
    <property type="project" value="UniProtKB-UniRule"/>
</dbReference>
<dbReference type="CDD" id="cd01288">
    <property type="entry name" value="FabZ"/>
    <property type="match status" value="1"/>
</dbReference>
<dbReference type="FunFam" id="3.10.129.10:FF:000001">
    <property type="entry name" value="3-hydroxyacyl-[acyl-carrier-protein] dehydratase FabZ"/>
    <property type="match status" value="1"/>
</dbReference>
<dbReference type="Gene3D" id="3.10.129.10">
    <property type="entry name" value="Hotdog Thioesterase"/>
    <property type="match status" value="1"/>
</dbReference>
<dbReference type="HAMAP" id="MF_00406">
    <property type="entry name" value="FabZ"/>
    <property type="match status" value="1"/>
</dbReference>
<dbReference type="InterPro" id="IPR013114">
    <property type="entry name" value="FabA_FabZ"/>
</dbReference>
<dbReference type="InterPro" id="IPR010084">
    <property type="entry name" value="FabZ"/>
</dbReference>
<dbReference type="InterPro" id="IPR029069">
    <property type="entry name" value="HotDog_dom_sf"/>
</dbReference>
<dbReference type="NCBIfam" id="TIGR01750">
    <property type="entry name" value="fabZ"/>
    <property type="match status" value="1"/>
</dbReference>
<dbReference type="NCBIfam" id="NF000582">
    <property type="entry name" value="PRK00006.1"/>
    <property type="match status" value="1"/>
</dbReference>
<dbReference type="PANTHER" id="PTHR30272">
    <property type="entry name" value="3-HYDROXYACYL-[ACYL-CARRIER-PROTEIN] DEHYDRATASE"/>
    <property type="match status" value="1"/>
</dbReference>
<dbReference type="PANTHER" id="PTHR30272:SF1">
    <property type="entry name" value="3-HYDROXYACYL-[ACYL-CARRIER-PROTEIN] DEHYDRATASE"/>
    <property type="match status" value="1"/>
</dbReference>
<dbReference type="Pfam" id="PF07977">
    <property type="entry name" value="FabA"/>
    <property type="match status" value="1"/>
</dbReference>
<dbReference type="SUPFAM" id="SSF54637">
    <property type="entry name" value="Thioesterase/thiol ester dehydrase-isomerase"/>
    <property type="match status" value="1"/>
</dbReference>
<keyword id="KW-0963">Cytoplasm</keyword>
<keyword id="KW-0441">Lipid A biosynthesis</keyword>
<keyword id="KW-0444">Lipid biosynthesis</keyword>
<keyword id="KW-0443">Lipid metabolism</keyword>
<keyword id="KW-0456">Lyase</keyword>
<protein>
    <recommendedName>
        <fullName evidence="1">3-hydroxyacyl-[acyl-carrier-protein] dehydratase FabZ</fullName>
        <ecNumber evidence="1">4.2.1.59</ecNumber>
    </recommendedName>
    <alternativeName>
        <fullName evidence="1">(3R)-hydroxymyristoyl-[acyl-carrier-protein] dehydratase</fullName>
        <shortName evidence="1">(3R)-hydroxymyristoyl-ACP dehydrase</shortName>
    </alternativeName>
    <alternativeName>
        <fullName evidence="1">Beta-hydroxyacyl-ACP dehydratase</fullName>
    </alternativeName>
</protein>
<gene>
    <name evidence="1" type="primary">fabZ</name>
    <name type="ordered locus">RHECIAT_CH0002019</name>
</gene>
<evidence type="ECO:0000255" key="1">
    <source>
        <dbReference type="HAMAP-Rule" id="MF_00406"/>
    </source>
</evidence>
<feature type="chain" id="PRO_1000123655" description="3-hydroxyacyl-[acyl-carrier-protein] dehydratase FabZ">
    <location>
        <begin position="1"/>
        <end position="155"/>
    </location>
</feature>
<feature type="active site" evidence="1">
    <location>
        <position position="58"/>
    </location>
</feature>